<accession>Q9P7R8</accession>
<keyword id="KW-0963">Cytoplasm</keyword>
<keyword id="KW-0333">Golgi apparatus</keyword>
<keyword id="KW-0472">Membrane</keyword>
<keyword id="KW-0597">Phosphoprotein</keyword>
<keyword id="KW-1185">Reference proteome</keyword>
<keyword id="KW-0812">Transmembrane</keyword>
<keyword id="KW-1133">Transmembrane helix</keyword>
<name>YHV3_SCHPO</name>
<reference key="1">
    <citation type="journal article" date="2002" name="Nature">
        <title>The genome sequence of Schizosaccharomyces pombe.</title>
        <authorList>
            <person name="Wood V."/>
            <person name="Gwilliam R."/>
            <person name="Rajandream M.A."/>
            <person name="Lyne M.H."/>
            <person name="Lyne R."/>
            <person name="Stewart A."/>
            <person name="Sgouros J.G."/>
            <person name="Peat N."/>
            <person name="Hayles J."/>
            <person name="Baker S.G."/>
            <person name="Basham D."/>
            <person name="Bowman S."/>
            <person name="Brooks K."/>
            <person name="Brown D."/>
            <person name="Brown S."/>
            <person name="Chillingworth T."/>
            <person name="Churcher C.M."/>
            <person name="Collins M."/>
            <person name="Connor R."/>
            <person name="Cronin A."/>
            <person name="Davis P."/>
            <person name="Feltwell T."/>
            <person name="Fraser A."/>
            <person name="Gentles S."/>
            <person name="Goble A."/>
            <person name="Hamlin N."/>
            <person name="Harris D.E."/>
            <person name="Hidalgo J."/>
            <person name="Hodgson G."/>
            <person name="Holroyd S."/>
            <person name="Hornsby T."/>
            <person name="Howarth S."/>
            <person name="Huckle E.J."/>
            <person name="Hunt S."/>
            <person name="Jagels K."/>
            <person name="James K.D."/>
            <person name="Jones L."/>
            <person name="Jones M."/>
            <person name="Leather S."/>
            <person name="McDonald S."/>
            <person name="McLean J."/>
            <person name="Mooney P."/>
            <person name="Moule S."/>
            <person name="Mungall K.L."/>
            <person name="Murphy L.D."/>
            <person name="Niblett D."/>
            <person name="Odell C."/>
            <person name="Oliver K."/>
            <person name="O'Neil S."/>
            <person name="Pearson D."/>
            <person name="Quail M.A."/>
            <person name="Rabbinowitsch E."/>
            <person name="Rutherford K.M."/>
            <person name="Rutter S."/>
            <person name="Saunders D."/>
            <person name="Seeger K."/>
            <person name="Sharp S."/>
            <person name="Skelton J."/>
            <person name="Simmonds M.N."/>
            <person name="Squares R."/>
            <person name="Squares S."/>
            <person name="Stevens K."/>
            <person name="Taylor K."/>
            <person name="Taylor R.G."/>
            <person name="Tivey A."/>
            <person name="Walsh S.V."/>
            <person name="Warren T."/>
            <person name="Whitehead S."/>
            <person name="Woodward J.R."/>
            <person name="Volckaert G."/>
            <person name="Aert R."/>
            <person name="Robben J."/>
            <person name="Grymonprez B."/>
            <person name="Weltjens I."/>
            <person name="Vanstreels E."/>
            <person name="Rieger M."/>
            <person name="Schaefer M."/>
            <person name="Mueller-Auer S."/>
            <person name="Gabel C."/>
            <person name="Fuchs M."/>
            <person name="Duesterhoeft A."/>
            <person name="Fritzc C."/>
            <person name="Holzer E."/>
            <person name="Moestl D."/>
            <person name="Hilbert H."/>
            <person name="Borzym K."/>
            <person name="Langer I."/>
            <person name="Beck A."/>
            <person name="Lehrach H."/>
            <person name="Reinhardt R."/>
            <person name="Pohl T.M."/>
            <person name="Eger P."/>
            <person name="Zimmermann W."/>
            <person name="Wedler H."/>
            <person name="Wambutt R."/>
            <person name="Purnelle B."/>
            <person name="Goffeau A."/>
            <person name="Cadieu E."/>
            <person name="Dreano S."/>
            <person name="Gloux S."/>
            <person name="Lelaure V."/>
            <person name="Mottier S."/>
            <person name="Galibert F."/>
            <person name="Aves S.J."/>
            <person name="Xiang Z."/>
            <person name="Hunt C."/>
            <person name="Moore K."/>
            <person name="Hurst S.M."/>
            <person name="Lucas M."/>
            <person name="Rochet M."/>
            <person name="Gaillardin C."/>
            <person name="Tallada V.A."/>
            <person name="Garzon A."/>
            <person name="Thode G."/>
            <person name="Daga R.R."/>
            <person name="Cruzado L."/>
            <person name="Jimenez J."/>
            <person name="Sanchez M."/>
            <person name="del Rey F."/>
            <person name="Benito J."/>
            <person name="Dominguez A."/>
            <person name="Revuelta J.L."/>
            <person name="Moreno S."/>
            <person name="Armstrong J."/>
            <person name="Forsburg S.L."/>
            <person name="Cerutti L."/>
            <person name="Lowe T."/>
            <person name="McCombie W.R."/>
            <person name="Paulsen I."/>
            <person name="Potashkin J."/>
            <person name="Shpakovski G.V."/>
            <person name="Ussery D."/>
            <person name="Barrell B.G."/>
            <person name="Nurse P."/>
        </authorList>
    </citation>
    <scope>NUCLEOTIDE SEQUENCE [LARGE SCALE GENOMIC DNA]</scope>
    <source>
        <strain>972 / ATCC 24843</strain>
    </source>
</reference>
<reference key="2">
    <citation type="journal article" date="2006" name="Nat. Biotechnol.">
        <title>ORFeome cloning and global analysis of protein localization in the fission yeast Schizosaccharomyces pombe.</title>
        <authorList>
            <person name="Matsuyama A."/>
            <person name="Arai R."/>
            <person name="Yashiroda Y."/>
            <person name="Shirai A."/>
            <person name="Kamata A."/>
            <person name="Sekido S."/>
            <person name="Kobayashi Y."/>
            <person name="Hashimoto A."/>
            <person name="Hamamoto M."/>
            <person name="Hiraoka Y."/>
            <person name="Horinouchi S."/>
            <person name="Yoshida M."/>
        </authorList>
    </citation>
    <scope>SUBCELLULAR LOCATION [LARGE SCALE ANALYSIS]</scope>
</reference>
<reference key="3">
    <citation type="journal article" date="2008" name="J. Proteome Res.">
        <title>Phosphoproteome analysis of fission yeast.</title>
        <authorList>
            <person name="Wilson-Grady J.T."/>
            <person name="Villen J."/>
            <person name="Gygi S.P."/>
        </authorList>
    </citation>
    <scope>PHOSPHORYLATION [LARGE SCALE ANALYSIS] AT SER-411 AND SER-420</scope>
    <scope>IDENTIFICATION BY MASS SPECTROMETRY</scope>
</reference>
<sequence>MEVPRASPNQEPLCSISPSSLVINEIITVVTAIRKTTRWRNSGVASILGVSTLKDEFLADGLESRWKTNGEKSSSIRYPLVMEFSQLKEDLTNRASLNGYDSLKLLSPFLRTIKSPRMTGYITSLCLSAILKFFSFRIISEESPNLALSMRNLSFAITQCRFESFDASQDEAVLLRVSRLMEELLRGPGKAVLSDDSICEIVETGLSMCCQSRLSQVLRYSAELSMTSILEKIFERLKYIDVKTDSEDFWDASEEHSIKGEEFHYKKITEGDEISNEIDPFGIGSIREVFRVLVSFIDFGKQKFSDNIKAMALRFINTALEVSGSHISDFPSLRVLITDTLCKSLLQLIRSDHTALLTNSLLVMTTLLQAMPGSLKLQQELFISYLISCLHIPSTTPRERNVETSLHKVVSSLDLSEEISPDRATPTSFTERKRFAFDTRNRPPEVRELIVECLGSLSRIPYFLIDLYVNYDCDPQMSDLAIDLLKVLTRNCLVDSARYSTANVPPLCLDALLNFIYYFHEHLQPCYNDPNNTFKDDVAKTLIESKKRKAIIIEGAELFNESPSDGIAFLTQHSIIKQSDNPTCIVEFFHSTNRLSKRVLGEFLTKGSNSHILNAFISAFDFKGKRIDEALRLLLQSFRLPGESQLIERVLETFSHYYMSANPDSMSSKDAAFVLSYSIIMLNTDQHNPNIKSQRRMTLDDFCRNVRGVNDGQDFDRNFLSEIYKAIKENEIIVAEEHDTELSFLYIWSKLQQSVKITEPFKRSSSNVHDKIVFLEVWKSIMAALIYVFSTATEDTVFYRVVNGIQQATEVAAAYELNEPVDYAIERFCQFTALDPSSVPGTQLNTAIKVEDRIITVSELSVRFGRDFRAQLALLVLFWISSKFGNIIDASWPLLVQLTICLARNNLIDNSFLPGFKLFGYQWFPFPEPPLNSGKPALSKEGGLLSALSSYLSSYANDEPPCPTDEEIQHTLCTIDCISSAKIDNFLTKLVDLKQPGLNKLLDSLLSLSNPSTSLLTDENTVDDNKVSSVEALSNIQSAIVADLLTSLFLGTRESLNKLERRTQILSYLLFQIEQSGDEKVINQLSLYIFEMFMDDDLKLSENSEDWGLFSKLCNLLNDKNIVVRNQSLSLFHQLVNKYPFLLESWIGLQLVQSAVNTNTADIDDLYRLLSKIPTNLLDLPMFQVYLGCVDTLIQTIVKQIAQILSKQKKGASKGLPFDKSILDNHSAELNDAFNLFLKAAVEYKVDSNESSEHFQDTRWKIIYDHVCKLCLSRSRSLRAASLSCLQRIVVEQLDQPHEVSYTMALFHLVLLPTMENMITVLTEKPEHKIFGLAQAQMFNIICKTVLIDMNVLSAQKEMLHTLWLKLMDVAIKLSSIHGSESMAEVMESIKNVFMILHGAGALAGPTIEVDPEIPDHLIKTWNTTWNNLFIYYPELSNDLNINNEAEMKKENLKNPSQTTTV</sequence>
<feature type="chain" id="PRO_0000303920" description="Uncharacterized protein C211.03">
    <location>
        <begin position="1"/>
        <end position="1462"/>
    </location>
</feature>
<feature type="transmembrane region" description="Helical" evidence="1">
    <location>
        <begin position="119"/>
        <end position="139"/>
    </location>
</feature>
<feature type="domain" description="SEC7" evidence="2">
    <location>
        <begin position="541"/>
        <end position="730"/>
    </location>
</feature>
<feature type="repeat" description="HEAT">
    <location>
        <begin position="1102"/>
        <end position="1139"/>
    </location>
</feature>
<feature type="modified residue" description="Phosphoserine" evidence="4">
    <location>
        <position position="411"/>
    </location>
</feature>
<feature type="modified residue" description="Phosphoserine" evidence="4">
    <location>
        <position position="420"/>
    </location>
</feature>
<proteinExistence type="evidence at protein level"/>
<organism>
    <name type="scientific">Schizosaccharomyces pombe (strain 972 / ATCC 24843)</name>
    <name type="common">Fission yeast</name>
    <dbReference type="NCBI Taxonomy" id="284812"/>
    <lineage>
        <taxon>Eukaryota</taxon>
        <taxon>Fungi</taxon>
        <taxon>Dikarya</taxon>
        <taxon>Ascomycota</taxon>
        <taxon>Taphrinomycotina</taxon>
        <taxon>Schizosaccharomycetes</taxon>
        <taxon>Schizosaccharomycetales</taxon>
        <taxon>Schizosaccharomycetaceae</taxon>
        <taxon>Schizosaccharomyces</taxon>
    </lineage>
</organism>
<evidence type="ECO:0000255" key="1"/>
<evidence type="ECO:0000255" key="2">
    <source>
        <dbReference type="PROSITE-ProRule" id="PRU00189"/>
    </source>
</evidence>
<evidence type="ECO:0000269" key="3">
    <source>
    </source>
</evidence>
<evidence type="ECO:0000269" key="4">
    <source>
    </source>
</evidence>
<evidence type="ECO:0000305" key="5"/>
<dbReference type="EMBL" id="CU329671">
    <property type="protein sequence ID" value="CAB75411.1"/>
    <property type="molecule type" value="Genomic_DNA"/>
</dbReference>
<dbReference type="PIR" id="T50338">
    <property type="entry name" value="T50338"/>
</dbReference>
<dbReference type="SMR" id="Q9P7R8"/>
<dbReference type="BioGRID" id="277269">
    <property type="interactions" value="2"/>
</dbReference>
<dbReference type="FunCoup" id="Q9P7R8">
    <property type="interactions" value="660"/>
</dbReference>
<dbReference type="STRING" id="284812.Q9P7R8"/>
<dbReference type="iPTMnet" id="Q9P7R8"/>
<dbReference type="PaxDb" id="4896-SPBC211.03c.1"/>
<dbReference type="EnsemblFungi" id="SPBC211.03c.1">
    <property type="protein sequence ID" value="SPBC211.03c.1:pep"/>
    <property type="gene ID" value="SPBC211.03c"/>
</dbReference>
<dbReference type="KEGG" id="spo:2540746"/>
<dbReference type="PomBase" id="SPBC211.03c"/>
<dbReference type="VEuPathDB" id="FungiDB:SPBC211.03c"/>
<dbReference type="eggNOG" id="KOG0928">
    <property type="taxonomic scope" value="Eukaryota"/>
</dbReference>
<dbReference type="HOGENOM" id="CLU_001204_3_1_1"/>
<dbReference type="InParanoid" id="Q9P7R8"/>
<dbReference type="OMA" id="ILWTRSP"/>
<dbReference type="PhylomeDB" id="Q9P7R8"/>
<dbReference type="Reactome" id="R-SPO-199992">
    <property type="pathway name" value="trans-Golgi Network Vesicle Budding"/>
</dbReference>
<dbReference type="Reactome" id="R-SPO-5620916">
    <property type="pathway name" value="VxPx cargo-targeting to cilium"/>
</dbReference>
<dbReference type="Reactome" id="R-SPO-6807878">
    <property type="pathway name" value="COPI-mediated anterograde transport"/>
</dbReference>
<dbReference type="Reactome" id="R-SPO-6811434">
    <property type="pathway name" value="COPI-dependent Golgi-to-ER retrograde traffic"/>
</dbReference>
<dbReference type="PRO" id="PR:Q9P7R8"/>
<dbReference type="Proteomes" id="UP000002485">
    <property type="component" value="Chromosome II"/>
</dbReference>
<dbReference type="GO" id="GO:0005737">
    <property type="term" value="C:cytoplasm"/>
    <property type="evidence" value="ECO:0007005"/>
    <property type="project" value="PomBase"/>
</dbReference>
<dbReference type="GO" id="GO:0005829">
    <property type="term" value="C:cytosol"/>
    <property type="evidence" value="ECO:0007005"/>
    <property type="project" value="PomBase"/>
</dbReference>
<dbReference type="GO" id="GO:0005794">
    <property type="term" value="C:Golgi apparatus"/>
    <property type="evidence" value="ECO:0000314"/>
    <property type="project" value="PomBase"/>
</dbReference>
<dbReference type="GO" id="GO:0000139">
    <property type="term" value="C:Golgi membrane"/>
    <property type="evidence" value="ECO:0007669"/>
    <property type="project" value="UniProtKB-SubCell"/>
</dbReference>
<dbReference type="GO" id="GO:0005085">
    <property type="term" value="F:guanyl-nucleotide exchange factor activity"/>
    <property type="evidence" value="ECO:0000266"/>
    <property type="project" value="PomBase"/>
</dbReference>
<dbReference type="GO" id="GO:0030036">
    <property type="term" value="P:actin cytoskeleton organization"/>
    <property type="evidence" value="ECO:0000266"/>
    <property type="project" value="PomBase"/>
</dbReference>
<dbReference type="GO" id="GO:0006888">
    <property type="term" value="P:endoplasmic reticulum to Golgi vesicle-mediated transport"/>
    <property type="evidence" value="ECO:0000266"/>
    <property type="project" value="PomBase"/>
</dbReference>
<dbReference type="GO" id="GO:0043001">
    <property type="term" value="P:Golgi to plasma membrane protein transport"/>
    <property type="evidence" value="ECO:0000315"/>
    <property type="project" value="PomBase"/>
</dbReference>
<dbReference type="GO" id="GO:0032012">
    <property type="term" value="P:regulation of ARF protein signal transduction"/>
    <property type="evidence" value="ECO:0007669"/>
    <property type="project" value="InterPro"/>
</dbReference>
<dbReference type="GO" id="GO:0023052">
    <property type="term" value="P:signaling"/>
    <property type="evidence" value="ECO:0000303"/>
    <property type="project" value="PomBase"/>
</dbReference>
<dbReference type="CDD" id="cd00171">
    <property type="entry name" value="Sec7"/>
    <property type="match status" value="1"/>
</dbReference>
<dbReference type="FunFam" id="1.10.1000.11:FF:000002">
    <property type="entry name" value="Cytohesin 1"/>
    <property type="match status" value="1"/>
</dbReference>
<dbReference type="Gene3D" id="1.10.220.20">
    <property type="match status" value="1"/>
</dbReference>
<dbReference type="Gene3D" id="1.10.1000.11">
    <property type="entry name" value="Arf Nucleotide-binding Site Opener,domain 2"/>
    <property type="match status" value="1"/>
</dbReference>
<dbReference type="InterPro" id="IPR016024">
    <property type="entry name" value="ARM-type_fold"/>
</dbReference>
<dbReference type="InterPro" id="IPR056604">
    <property type="entry name" value="GBF1-like_TPR"/>
</dbReference>
<dbReference type="InterPro" id="IPR032691">
    <property type="entry name" value="Mon2/Sec7/BIG1-like_HUS"/>
</dbReference>
<dbReference type="InterPro" id="IPR023394">
    <property type="entry name" value="Sec7_C_sf"/>
</dbReference>
<dbReference type="InterPro" id="IPR000904">
    <property type="entry name" value="Sec7_dom"/>
</dbReference>
<dbReference type="InterPro" id="IPR035999">
    <property type="entry name" value="Sec7_dom_sf"/>
</dbReference>
<dbReference type="PANTHER" id="PTHR10663:SF388">
    <property type="entry name" value="GOLGI-SPECIFIC BREFELDIN A-RESISTANCE GUANINE NUCLEOTIDE EXCHANGE FACTOR 1"/>
    <property type="match status" value="1"/>
</dbReference>
<dbReference type="PANTHER" id="PTHR10663">
    <property type="entry name" value="GUANYL-NUCLEOTIDE EXCHANGE FACTOR"/>
    <property type="match status" value="1"/>
</dbReference>
<dbReference type="Pfam" id="PF01369">
    <property type="entry name" value="Sec7"/>
    <property type="match status" value="1"/>
</dbReference>
<dbReference type="Pfam" id="PF12783">
    <property type="entry name" value="Sec7-like_HUS"/>
    <property type="match status" value="1"/>
</dbReference>
<dbReference type="Pfam" id="PF23325">
    <property type="entry name" value="TPR_28"/>
    <property type="match status" value="1"/>
</dbReference>
<dbReference type="SMART" id="SM00222">
    <property type="entry name" value="Sec7"/>
    <property type="match status" value="1"/>
</dbReference>
<dbReference type="SUPFAM" id="SSF48371">
    <property type="entry name" value="ARM repeat"/>
    <property type="match status" value="1"/>
</dbReference>
<dbReference type="SUPFAM" id="SSF48425">
    <property type="entry name" value="Sec7 domain"/>
    <property type="match status" value="1"/>
</dbReference>
<dbReference type="PROSITE" id="PS50190">
    <property type="entry name" value="SEC7"/>
    <property type="match status" value="1"/>
</dbReference>
<gene>
    <name type="ORF">SPBC211.03c</name>
</gene>
<protein>
    <recommendedName>
        <fullName>Uncharacterized protein C211.03</fullName>
    </recommendedName>
</protein>
<comment type="subcellular location">
    <subcellularLocation>
        <location evidence="3">Cytoplasm</location>
    </subcellularLocation>
    <subcellularLocation>
        <location evidence="5">Golgi apparatus membrane</location>
        <topology evidence="5">Single-pass membrane protein</topology>
    </subcellularLocation>
</comment>